<evidence type="ECO:0000255" key="1">
    <source>
        <dbReference type="HAMAP-Rule" id="MF_01128"/>
    </source>
</evidence>
<organism>
    <name type="scientific">Salmonella schwarzengrund (strain CVM19633)</name>
    <dbReference type="NCBI Taxonomy" id="439843"/>
    <lineage>
        <taxon>Bacteria</taxon>
        <taxon>Pseudomonadati</taxon>
        <taxon>Pseudomonadota</taxon>
        <taxon>Gammaproteobacteria</taxon>
        <taxon>Enterobacterales</taxon>
        <taxon>Enterobacteriaceae</taxon>
        <taxon>Salmonella</taxon>
    </lineage>
</organism>
<protein>
    <recommendedName>
        <fullName evidence="1">H(+)/Cl(-) exchange transporter ClcA</fullName>
    </recommendedName>
</protein>
<proteinExistence type="inferred from homology"/>
<gene>
    <name evidence="1" type="primary">clcA</name>
    <name evidence="1" type="synonym">eriC</name>
    <name type="ordered locus">SeSA_A0226</name>
</gene>
<comment type="function">
    <text evidence="1">Proton-coupled chloride transporter. Functions as antiport system and exchanges two chloride ions for 1 proton. Probably acts as an electrical shunt for an outwardly-directed proton pump that is linked to amino acid decarboxylation, as part of the extreme acid resistance (XAR) response.</text>
</comment>
<comment type="catalytic activity">
    <reaction evidence="1">
        <text>2 chloride(in) + H(+)(out) = 2 chloride(out) + H(+)(in)</text>
        <dbReference type="Rhea" id="RHEA:29567"/>
        <dbReference type="ChEBI" id="CHEBI:15378"/>
        <dbReference type="ChEBI" id="CHEBI:17996"/>
    </reaction>
</comment>
<comment type="subunit">
    <text evidence="1">Homodimer.</text>
</comment>
<comment type="subcellular location">
    <subcellularLocation>
        <location evidence="1">Cell inner membrane</location>
        <topology evidence="1">Multi-pass membrane protein</topology>
    </subcellularLocation>
</comment>
<comment type="similarity">
    <text evidence="1">Belongs to the chloride channel (TC 2.A.49) family. ClcA subfamily.</text>
</comment>
<keyword id="KW-0050">Antiport</keyword>
<keyword id="KW-0997">Cell inner membrane</keyword>
<keyword id="KW-1003">Cell membrane</keyword>
<keyword id="KW-0868">Chloride</keyword>
<keyword id="KW-0406">Ion transport</keyword>
<keyword id="KW-0472">Membrane</keyword>
<keyword id="KW-0812">Transmembrane</keyword>
<keyword id="KW-1133">Transmembrane helix</keyword>
<keyword id="KW-0813">Transport</keyword>
<sequence>MKTDNSTFLAQQIVRLRRRDQIRRLMQRDKTPLAILFMAAVVGTLTGLVGVAFEKAVSWVQNMRIGALVQVADHAFLLWPLAFILSALLAMVGYFLVRKFAPEAGGSGIPEIEGALEELRPVRWWRVLPVKFIGGMGTLGAGMVLGREGPTVQIGGNLGRMVLDVFRMRSAEARHTLLATGAAAGLSAAFNAPLAGILFIIEEMRPQFRYNLISIKAVFTGVIMSSIVFRIFNGEAPIIEVGKLSDAPVNTLWLYLILGIIFGCVGPVFNSLVLRTQDMFQRFHGGEIKKWVLMGGAIGGLCGILGLIEPEAAGGGFNLIPIAAAGNFSVGLLLFIFITRVVTTLLCFSSGAPGGIFAPMLALGTLLGTAFGMAAAVLFPQYHLEAGTFAIAGMGALMAASVRAPLTGIVLVLEMTDNYQLILPMIITCLGATLLAQFLGGKPLYSTILARTLAKQDAEQAAKNQNAPAGENT</sequence>
<reference key="1">
    <citation type="journal article" date="2011" name="J. Bacteriol.">
        <title>Comparative genomics of 28 Salmonella enterica isolates: evidence for CRISPR-mediated adaptive sublineage evolution.</title>
        <authorList>
            <person name="Fricke W.F."/>
            <person name="Mammel M.K."/>
            <person name="McDermott P.F."/>
            <person name="Tartera C."/>
            <person name="White D.G."/>
            <person name="Leclerc J.E."/>
            <person name="Ravel J."/>
            <person name="Cebula T.A."/>
        </authorList>
    </citation>
    <scope>NUCLEOTIDE SEQUENCE [LARGE SCALE GENOMIC DNA]</scope>
    <source>
        <strain>CVM19633</strain>
    </source>
</reference>
<accession>B4TXQ7</accession>
<name>CLCA_SALSV</name>
<feature type="chain" id="PRO_1000137310" description="H(+)/Cl(-) exchange transporter ClcA">
    <location>
        <begin position="1"/>
        <end position="473"/>
    </location>
</feature>
<feature type="topological domain" description="Cytoplasmic" evidence="1">
    <location>
        <begin position="1"/>
        <end position="32"/>
    </location>
</feature>
<feature type="transmembrane region" description="Helical" evidence="1">
    <location>
        <begin position="33"/>
        <end position="69"/>
    </location>
</feature>
<feature type="topological domain" description="Periplasmic" evidence="1">
    <location>
        <begin position="70"/>
        <end position="76"/>
    </location>
</feature>
<feature type="transmembrane region" description="Helical" evidence="1">
    <location>
        <begin position="77"/>
        <end position="100"/>
    </location>
</feature>
<feature type="intramembrane region" description="Helical" evidence="1">
    <location>
        <begin position="109"/>
        <end position="116"/>
    </location>
</feature>
<feature type="topological domain" description="Cytoplasmic" evidence="1">
    <location>
        <begin position="117"/>
        <end position="123"/>
    </location>
</feature>
<feature type="transmembrane region" description="Helical" evidence="1">
    <location>
        <begin position="124"/>
        <end position="141"/>
    </location>
</feature>
<feature type="transmembrane region" description="Helical" evidence="1">
    <location>
        <begin position="148"/>
        <end position="166"/>
    </location>
</feature>
<feature type="topological domain" description="Cytoplasmic" evidence="1">
    <location>
        <begin position="167"/>
        <end position="176"/>
    </location>
</feature>
<feature type="intramembrane region" description="Helical" evidence="1">
    <location>
        <begin position="177"/>
        <end position="189"/>
    </location>
</feature>
<feature type="intramembrane region" description="Helical" evidence="1">
    <location>
        <begin position="193"/>
        <end position="201"/>
    </location>
</feature>
<feature type="topological domain" description="Cytoplasmic" evidence="1">
    <location>
        <begin position="202"/>
        <end position="214"/>
    </location>
</feature>
<feature type="transmembrane region" description="Helical" evidence="1">
    <location>
        <begin position="215"/>
        <end position="232"/>
    </location>
</feature>
<feature type="topological domain" description="Periplasmic" evidence="1">
    <location>
        <begin position="233"/>
        <end position="252"/>
    </location>
</feature>
<feature type="transmembrane region" description="Helical" evidence="1">
    <location>
        <begin position="253"/>
        <end position="281"/>
    </location>
</feature>
<feature type="topological domain" description="Cytoplasmic" evidence="1">
    <location>
        <begin position="282"/>
        <end position="287"/>
    </location>
</feature>
<feature type="transmembrane region" description="Helical" evidence="1">
    <location>
        <begin position="288"/>
        <end position="309"/>
    </location>
</feature>
<feature type="topological domain" description="Periplasmic" evidence="1">
    <location>
        <begin position="310"/>
        <end position="329"/>
    </location>
</feature>
<feature type="transmembrane region" description="Helical" evidence="1">
    <location>
        <begin position="330"/>
        <end position="349"/>
    </location>
</feature>
<feature type="transmembrane region" description="Helical" evidence="1">
    <location>
        <begin position="355"/>
        <end position="376"/>
    </location>
</feature>
<feature type="topological domain" description="Periplasmic" evidence="1">
    <location>
        <begin position="377"/>
        <end position="386"/>
    </location>
</feature>
<feature type="intramembrane region" description="Helical" evidence="1">
    <location>
        <begin position="387"/>
        <end position="401"/>
    </location>
</feature>
<feature type="intramembrane region" description="Note=Loop between two helices" evidence="1">
    <location>
        <begin position="402"/>
        <end position="404"/>
    </location>
</feature>
<feature type="intramembrane region" description="Helical" evidence="1">
    <location>
        <begin position="405"/>
        <end position="416"/>
    </location>
</feature>
<feature type="intramembrane region" description="Note=Loop between two helices" evidence="1">
    <location>
        <begin position="417"/>
        <end position="421"/>
    </location>
</feature>
<feature type="transmembrane region" description="Helical" evidence="1">
    <location>
        <begin position="422"/>
        <end position="438"/>
    </location>
</feature>
<feature type="topological domain" description="Cytoplasmic" evidence="1">
    <location>
        <begin position="439"/>
        <end position="473"/>
    </location>
</feature>
<feature type="short sequence motif" description="Selectivity filter part_1" evidence="1">
    <location>
        <begin position="106"/>
        <end position="110"/>
    </location>
</feature>
<feature type="short sequence motif" description="Selectivity filter part_2" evidence="1">
    <location>
        <begin position="146"/>
        <end position="150"/>
    </location>
</feature>
<feature type="short sequence motif" description="Selectivity filter part_3" evidence="1">
    <location>
        <begin position="355"/>
        <end position="359"/>
    </location>
</feature>
<feature type="binding site" evidence="1">
    <location>
        <position position="107"/>
    </location>
    <ligand>
        <name>chloride</name>
        <dbReference type="ChEBI" id="CHEBI:17996"/>
    </ligand>
</feature>
<feature type="binding site" evidence="1">
    <location>
        <position position="356"/>
    </location>
    <ligand>
        <name>chloride</name>
        <dbReference type="ChEBI" id="CHEBI:17996"/>
    </ligand>
</feature>
<feature type="binding site" evidence="1">
    <location>
        <position position="357"/>
    </location>
    <ligand>
        <name>chloride</name>
        <dbReference type="ChEBI" id="CHEBI:17996"/>
    </ligand>
</feature>
<feature type="binding site" evidence="1">
    <location>
        <position position="445"/>
    </location>
    <ligand>
        <name>chloride</name>
        <dbReference type="ChEBI" id="CHEBI:17996"/>
    </ligand>
</feature>
<feature type="site" description="Mediates proton transfer from the outer aqueous phase to the interior of the protein; involved in linking H(+) and Cl(-) transport" evidence="1">
    <location>
        <position position="148"/>
    </location>
</feature>
<feature type="site" description="Mediates proton transfer from the protein to the inner aqueous phase" evidence="1">
    <location>
        <position position="203"/>
    </location>
</feature>
<dbReference type="EMBL" id="CP001127">
    <property type="protein sequence ID" value="ACF90037.1"/>
    <property type="molecule type" value="Genomic_DNA"/>
</dbReference>
<dbReference type="RefSeq" id="WP_000845365.1">
    <property type="nucleotide sequence ID" value="NC_011094.1"/>
</dbReference>
<dbReference type="SMR" id="B4TXQ7"/>
<dbReference type="KEGG" id="sew:SeSA_A0226"/>
<dbReference type="HOGENOM" id="CLU_015263_7_0_6"/>
<dbReference type="Proteomes" id="UP000001865">
    <property type="component" value="Chromosome"/>
</dbReference>
<dbReference type="GO" id="GO:0005886">
    <property type="term" value="C:plasma membrane"/>
    <property type="evidence" value="ECO:0007669"/>
    <property type="project" value="UniProtKB-SubCell"/>
</dbReference>
<dbReference type="GO" id="GO:0015297">
    <property type="term" value="F:antiporter activity"/>
    <property type="evidence" value="ECO:0007669"/>
    <property type="project" value="UniProtKB-UniRule"/>
</dbReference>
<dbReference type="GO" id="GO:0005247">
    <property type="term" value="F:voltage-gated chloride channel activity"/>
    <property type="evidence" value="ECO:0007669"/>
    <property type="project" value="TreeGrafter"/>
</dbReference>
<dbReference type="CDD" id="cd01031">
    <property type="entry name" value="EriC"/>
    <property type="match status" value="1"/>
</dbReference>
<dbReference type="FunFam" id="1.10.3080.10:FF:000005">
    <property type="entry name" value="H(+)/Cl(-) exchange transporter ClcA"/>
    <property type="match status" value="1"/>
</dbReference>
<dbReference type="Gene3D" id="1.10.3080.10">
    <property type="entry name" value="Clc chloride channel"/>
    <property type="match status" value="1"/>
</dbReference>
<dbReference type="HAMAP" id="MF_01128">
    <property type="entry name" value="CLC_ClcA"/>
    <property type="match status" value="1"/>
</dbReference>
<dbReference type="InterPro" id="IPR023861">
    <property type="entry name" value="Cl-channel_ClcA"/>
</dbReference>
<dbReference type="InterPro" id="IPR014743">
    <property type="entry name" value="Cl-channel_core"/>
</dbReference>
<dbReference type="InterPro" id="IPR001807">
    <property type="entry name" value="ClC"/>
</dbReference>
<dbReference type="NCBIfam" id="NF003640">
    <property type="entry name" value="PRK05277.1"/>
    <property type="match status" value="1"/>
</dbReference>
<dbReference type="PANTHER" id="PTHR45711">
    <property type="entry name" value="CHLORIDE CHANNEL PROTEIN"/>
    <property type="match status" value="1"/>
</dbReference>
<dbReference type="PANTHER" id="PTHR45711:SF6">
    <property type="entry name" value="CHLORIDE CHANNEL PROTEIN"/>
    <property type="match status" value="1"/>
</dbReference>
<dbReference type="Pfam" id="PF00654">
    <property type="entry name" value="Voltage_CLC"/>
    <property type="match status" value="1"/>
</dbReference>
<dbReference type="PRINTS" id="PR00762">
    <property type="entry name" value="CLCHANNEL"/>
</dbReference>
<dbReference type="SUPFAM" id="SSF81340">
    <property type="entry name" value="Clc chloride channel"/>
    <property type="match status" value="1"/>
</dbReference>